<keyword id="KW-0256">Endoplasmic reticulum</keyword>
<keyword id="KW-0443">Lipid metabolism</keyword>
<keyword id="KW-0472">Membrane</keyword>
<keyword id="KW-0521">NADP</keyword>
<keyword id="KW-0547">Nucleotide-binding</keyword>
<keyword id="KW-0560">Oxidoreductase</keyword>
<keyword id="KW-1185">Reference proteome</keyword>
<keyword id="KW-0746">Sphingolipid metabolism</keyword>
<keyword id="KW-0812">Transmembrane</keyword>
<keyword id="KW-1133">Transmembrane helix</keyword>
<reference key="1">
    <citation type="journal article" date="2003" name="Nature">
        <title>The genome sequence of the filamentous fungus Neurospora crassa.</title>
        <authorList>
            <person name="Galagan J.E."/>
            <person name="Calvo S.E."/>
            <person name="Borkovich K.A."/>
            <person name="Selker E.U."/>
            <person name="Read N.D."/>
            <person name="Jaffe D.B."/>
            <person name="FitzHugh W."/>
            <person name="Ma L.-J."/>
            <person name="Smirnov S."/>
            <person name="Purcell S."/>
            <person name="Rehman B."/>
            <person name="Elkins T."/>
            <person name="Engels R."/>
            <person name="Wang S."/>
            <person name="Nielsen C.B."/>
            <person name="Butler J."/>
            <person name="Endrizzi M."/>
            <person name="Qui D."/>
            <person name="Ianakiev P."/>
            <person name="Bell-Pedersen D."/>
            <person name="Nelson M.A."/>
            <person name="Werner-Washburne M."/>
            <person name="Selitrennikoff C.P."/>
            <person name="Kinsey J.A."/>
            <person name="Braun E.L."/>
            <person name="Zelter A."/>
            <person name="Schulte U."/>
            <person name="Kothe G.O."/>
            <person name="Jedd G."/>
            <person name="Mewes H.-W."/>
            <person name="Staben C."/>
            <person name="Marcotte E."/>
            <person name="Greenberg D."/>
            <person name="Roy A."/>
            <person name="Foley K."/>
            <person name="Naylor J."/>
            <person name="Stange-Thomann N."/>
            <person name="Barrett R."/>
            <person name="Gnerre S."/>
            <person name="Kamal M."/>
            <person name="Kamvysselis M."/>
            <person name="Mauceli E.W."/>
            <person name="Bielke C."/>
            <person name="Rudd S."/>
            <person name="Frishman D."/>
            <person name="Krystofova S."/>
            <person name="Rasmussen C."/>
            <person name="Metzenberg R.L."/>
            <person name="Perkins D.D."/>
            <person name="Kroken S."/>
            <person name="Cogoni C."/>
            <person name="Macino G."/>
            <person name="Catcheside D.E.A."/>
            <person name="Li W."/>
            <person name="Pratt R.J."/>
            <person name="Osmani S.A."/>
            <person name="DeSouza C.P.C."/>
            <person name="Glass N.L."/>
            <person name="Orbach M.J."/>
            <person name="Berglund J.A."/>
            <person name="Voelker R."/>
            <person name="Yarden O."/>
            <person name="Plamann M."/>
            <person name="Seiler S."/>
            <person name="Dunlap J.C."/>
            <person name="Radford A."/>
            <person name="Aramayo R."/>
            <person name="Natvig D.O."/>
            <person name="Alex L.A."/>
            <person name="Mannhaupt G."/>
            <person name="Ebbole D.J."/>
            <person name="Freitag M."/>
            <person name="Paulsen I."/>
            <person name="Sachs M.S."/>
            <person name="Lander E.S."/>
            <person name="Nusbaum C."/>
            <person name="Birren B.W."/>
        </authorList>
    </citation>
    <scope>NUCLEOTIDE SEQUENCE [LARGE SCALE GENOMIC DNA]</scope>
    <source>
        <strain>ATCC 24698 / 74-OR23-1A / CBS 708.71 / DSM 1257 / FGSC 987</strain>
    </source>
</reference>
<evidence type="ECO:0000250" key="1">
    <source>
        <dbReference type="UniProtKB" id="L0E2Z4"/>
    </source>
</evidence>
<evidence type="ECO:0000250" key="2">
    <source>
        <dbReference type="UniProtKB" id="O93868"/>
    </source>
</evidence>
<evidence type="ECO:0000250" key="3">
    <source>
        <dbReference type="UniProtKB" id="P0CR36"/>
    </source>
</evidence>
<evidence type="ECO:0000250" key="4">
    <source>
        <dbReference type="UniProtKB" id="P38342"/>
    </source>
</evidence>
<evidence type="ECO:0000250" key="5">
    <source>
        <dbReference type="UniProtKB" id="P40471"/>
    </source>
</evidence>
<evidence type="ECO:0000255" key="6"/>
<evidence type="ECO:0000305" key="7"/>
<protein>
    <recommendedName>
        <fullName>3-ketodihydrosphingosine reductase gsl-3</fullName>
        <ecNumber evidence="4">1.1.1.102</ecNumber>
    </recommendedName>
    <alternativeName>
        <fullName>3-dehydrosphinganine reductase</fullName>
    </alternativeName>
    <alternativeName>
        <fullName>KDS reductase</fullName>
    </alternativeName>
</protein>
<name>KDSR_NEUCR</name>
<accession>Q7RZR2</accession>
<sequence>MNHYLFSESLMEQLKTLSTSWSLPVAAVVAAIGIFATMGLFSSKNHMPVEGRTVLLTGASEGMGRSAAIQLSQKGANVILVSRNVGRLEEALVDVRAAAKNPSTQRFTYISADVSEHDYAAAVLAEAIAWNGGRSPDIVWCVAGMSTPLLWTDDGSMAAARRNMDVNYFGSAEMSRAILREWLAPENSTGPNGEPKHLVFTASMLALFAILGYGPYTPTKWALRGLADTLAMEVNYYPDNPVKVHIVYPGTIVSPGYERENQTKPDITVELEKDEPAESPDTVARRAIAGLEAGKYFVDVSFLGRLMQCGIMGGSPRNNWVLDTLMGWLIPIIYFFVLRGMNSTIVKWAREKGHPFTHPKKK</sequence>
<organism>
    <name type="scientific">Neurospora crassa (strain ATCC 24698 / 74-OR23-1A / CBS 708.71 / DSM 1257 / FGSC 987)</name>
    <dbReference type="NCBI Taxonomy" id="367110"/>
    <lineage>
        <taxon>Eukaryota</taxon>
        <taxon>Fungi</taxon>
        <taxon>Dikarya</taxon>
        <taxon>Ascomycota</taxon>
        <taxon>Pezizomycotina</taxon>
        <taxon>Sordariomycetes</taxon>
        <taxon>Sordariomycetidae</taxon>
        <taxon>Sordariales</taxon>
        <taxon>Sordariaceae</taxon>
        <taxon>Neurospora</taxon>
    </lineage>
</organism>
<proteinExistence type="inferred from homology"/>
<comment type="function">
    <text evidence="4">Catalyzes the reduction of 3'-oxosphinganine (3-ketodihydrosphingosine/KDS) to sphinganine (dihydrosphingosine/DHS), the second step of de novo sphingolipid biosynthesis.</text>
</comment>
<comment type="catalytic activity">
    <reaction evidence="4">
        <text>sphinganine + NADP(+) = 3-oxosphinganine + NADPH + H(+)</text>
        <dbReference type="Rhea" id="RHEA:22640"/>
        <dbReference type="ChEBI" id="CHEBI:15378"/>
        <dbReference type="ChEBI" id="CHEBI:57783"/>
        <dbReference type="ChEBI" id="CHEBI:57817"/>
        <dbReference type="ChEBI" id="CHEBI:58299"/>
        <dbReference type="ChEBI" id="CHEBI:58349"/>
        <dbReference type="EC" id="1.1.1.102"/>
    </reaction>
    <physiologicalReaction direction="right-to-left" evidence="4">
        <dbReference type="Rhea" id="RHEA:22642"/>
    </physiologicalReaction>
</comment>
<comment type="pathway">
    <text>Lipid metabolism; sphingolipid metabolism.</text>
</comment>
<comment type="subcellular location">
    <subcellularLocation>
        <location evidence="4">Endoplasmic reticulum membrane</location>
        <topology evidence="7">Single-pass membrane protein</topology>
    </subcellularLocation>
</comment>
<comment type="similarity">
    <text evidence="7">Belongs to the short-chain dehydrogenases/reductases (SDR) family.</text>
</comment>
<dbReference type="EC" id="1.1.1.102" evidence="4"/>
<dbReference type="EMBL" id="CM002238">
    <property type="protein sequence ID" value="EAA28537.3"/>
    <property type="molecule type" value="Genomic_DNA"/>
</dbReference>
<dbReference type="RefSeq" id="XP_957773.3">
    <property type="nucleotide sequence ID" value="XM_952680.3"/>
</dbReference>
<dbReference type="SMR" id="Q7RZR2"/>
<dbReference type="FunCoup" id="Q7RZR2">
    <property type="interactions" value="98"/>
</dbReference>
<dbReference type="STRING" id="367110.Q7RZR2"/>
<dbReference type="PaxDb" id="5141-EFNCRP00000000359"/>
<dbReference type="EnsemblFungi" id="EAA28537">
    <property type="protein sequence ID" value="EAA28537"/>
    <property type="gene ID" value="NCU00302"/>
</dbReference>
<dbReference type="GeneID" id="3873943"/>
<dbReference type="KEGG" id="ncr:NCU00302"/>
<dbReference type="VEuPathDB" id="FungiDB:NCU00302"/>
<dbReference type="HOGENOM" id="CLU_010194_3_0_1"/>
<dbReference type="InParanoid" id="Q7RZR2"/>
<dbReference type="OrthoDB" id="10267115at2759"/>
<dbReference type="UniPathway" id="UPA00222"/>
<dbReference type="Proteomes" id="UP000001805">
    <property type="component" value="Chromosome 3, Linkage Group III"/>
</dbReference>
<dbReference type="GO" id="GO:0005789">
    <property type="term" value="C:endoplasmic reticulum membrane"/>
    <property type="evidence" value="ECO:0000318"/>
    <property type="project" value="GO_Central"/>
</dbReference>
<dbReference type="GO" id="GO:0047560">
    <property type="term" value="F:3-dehydrosphinganine reductase activity"/>
    <property type="evidence" value="ECO:0000250"/>
    <property type="project" value="UniProtKB"/>
</dbReference>
<dbReference type="GO" id="GO:0070402">
    <property type="term" value="F:NADPH binding"/>
    <property type="evidence" value="ECO:0000250"/>
    <property type="project" value="UniProtKB"/>
</dbReference>
<dbReference type="GO" id="GO:0006666">
    <property type="term" value="P:3-keto-sphinganine metabolic process"/>
    <property type="evidence" value="ECO:0000250"/>
    <property type="project" value="UniProtKB"/>
</dbReference>
<dbReference type="GO" id="GO:0030148">
    <property type="term" value="P:sphingolipid biosynthetic process"/>
    <property type="evidence" value="ECO:0000250"/>
    <property type="project" value="UniProtKB"/>
</dbReference>
<dbReference type="CDD" id="cd08939">
    <property type="entry name" value="KDSR-like_SDR_c"/>
    <property type="match status" value="1"/>
</dbReference>
<dbReference type="FunFam" id="3.40.50.720:FF:000456">
    <property type="entry name" value="3-ketodihydrosphingosine reductase tsc10"/>
    <property type="match status" value="1"/>
</dbReference>
<dbReference type="Gene3D" id="3.40.50.720">
    <property type="entry name" value="NAD(P)-binding Rossmann-like Domain"/>
    <property type="match status" value="1"/>
</dbReference>
<dbReference type="InterPro" id="IPR045022">
    <property type="entry name" value="KDSR-like"/>
</dbReference>
<dbReference type="InterPro" id="IPR036291">
    <property type="entry name" value="NAD(P)-bd_dom_sf"/>
</dbReference>
<dbReference type="InterPro" id="IPR002347">
    <property type="entry name" value="SDR_fam"/>
</dbReference>
<dbReference type="PANTHER" id="PTHR43550">
    <property type="entry name" value="3-KETODIHYDROSPHINGOSINE REDUCTASE"/>
    <property type="match status" value="1"/>
</dbReference>
<dbReference type="PANTHER" id="PTHR43550:SF3">
    <property type="entry name" value="3-KETODIHYDROSPHINGOSINE REDUCTASE"/>
    <property type="match status" value="1"/>
</dbReference>
<dbReference type="Pfam" id="PF00106">
    <property type="entry name" value="adh_short"/>
    <property type="match status" value="1"/>
</dbReference>
<dbReference type="PRINTS" id="PR00081">
    <property type="entry name" value="GDHRDH"/>
</dbReference>
<dbReference type="SUPFAM" id="SSF51735">
    <property type="entry name" value="NAD(P)-binding Rossmann-fold domains"/>
    <property type="match status" value="1"/>
</dbReference>
<feature type="chain" id="PRO_0000054798" description="3-ketodihydrosphingosine reductase gsl-3">
    <location>
        <begin position="1"/>
        <end position="362"/>
    </location>
</feature>
<feature type="transmembrane region" description="Helical" evidence="6">
    <location>
        <begin position="318"/>
        <end position="338"/>
    </location>
</feature>
<feature type="short sequence motif" description="GXSXG" evidence="5">
    <location>
        <begin position="58"/>
        <end position="62"/>
    </location>
</feature>
<feature type="active site" description="Proton acceptor" evidence="2">
    <location>
        <position position="216"/>
    </location>
</feature>
<feature type="active site" description="Lowers pKa of active site Tyr" evidence="2">
    <location>
        <position position="220"/>
    </location>
</feature>
<feature type="binding site" evidence="1">
    <location>
        <position position="55"/>
    </location>
    <ligand>
        <name>NADP(+)</name>
        <dbReference type="ChEBI" id="CHEBI:58349"/>
    </ligand>
</feature>
<feature type="binding site" evidence="3">
    <location>
        <position position="58"/>
    </location>
    <ligand>
        <name>NADPH</name>
        <dbReference type="ChEBI" id="CHEBI:57783"/>
    </ligand>
</feature>
<feature type="binding site" evidence="3">
    <location>
        <position position="60"/>
    </location>
    <ligand>
        <name>NADPH</name>
        <dbReference type="ChEBI" id="CHEBI:57783"/>
    </ligand>
</feature>
<feature type="binding site" evidence="3">
    <location>
        <position position="62"/>
    </location>
    <ligand>
        <name>NADPH</name>
        <dbReference type="ChEBI" id="CHEBI:57783"/>
    </ligand>
</feature>
<feature type="binding site" evidence="3">
    <location>
        <position position="83"/>
    </location>
    <ligand>
        <name>NADPH</name>
        <dbReference type="ChEBI" id="CHEBI:57783"/>
    </ligand>
</feature>
<feature type="binding site" evidence="1">
    <location>
        <position position="84"/>
    </location>
    <ligand>
        <name>NADP(+)</name>
        <dbReference type="ChEBI" id="CHEBI:58349"/>
    </ligand>
</feature>
<feature type="binding site" evidence="3">
    <location>
        <position position="87"/>
    </location>
    <ligand>
        <name>NADPH</name>
        <dbReference type="ChEBI" id="CHEBI:57783"/>
    </ligand>
</feature>
<feature type="binding site" evidence="1">
    <location>
        <position position="113"/>
    </location>
    <ligand>
        <name>NADP(+)</name>
        <dbReference type="ChEBI" id="CHEBI:58349"/>
    </ligand>
</feature>
<feature type="binding site" evidence="3">
    <location>
        <position position="113"/>
    </location>
    <ligand>
        <name>NADPH</name>
        <dbReference type="ChEBI" id="CHEBI:57783"/>
    </ligand>
</feature>
<feature type="binding site" evidence="1">
    <location>
        <position position="176"/>
    </location>
    <ligand>
        <name>NADP(+)</name>
        <dbReference type="ChEBI" id="CHEBI:58349"/>
    </ligand>
</feature>
<feature type="binding site" evidence="2">
    <location>
        <position position="216"/>
    </location>
    <ligand>
        <name>NADP(+)</name>
        <dbReference type="ChEBI" id="CHEBI:58349"/>
    </ligand>
</feature>
<feature type="binding site" evidence="2">
    <location>
        <position position="220"/>
    </location>
    <ligand>
        <name>NADP(+)</name>
        <dbReference type="ChEBI" id="CHEBI:58349"/>
    </ligand>
</feature>
<feature type="binding site" evidence="1">
    <location>
        <position position="252"/>
    </location>
    <ligand>
        <name>NADP(+)</name>
        <dbReference type="ChEBI" id="CHEBI:58349"/>
    </ligand>
</feature>
<feature type="binding site" evidence="1">
    <location>
        <position position="254"/>
    </location>
    <ligand>
        <name>NADP(+)</name>
        <dbReference type="ChEBI" id="CHEBI:58349"/>
    </ligand>
</feature>
<gene>
    <name type="primary">gsl-3</name>
    <name type="synonym">tsc10</name>
    <name type="ORF">NCU00302</name>
</gene>